<sequence>MAGHSKWANIQHKKARQDAKRGKIFTRLIKEITVAARMGGGDPGANPRLRLALEKAAENNMPKDNVQRAIDKGTGNLEGVEYIGLRYEGYGIGGAALMVDCLTDNKTRTVADVRHAFTKNGGNLGTDGCVAFNFVHQGYLVFEPGVDEDELMEAALEAGAEDVVTNDDGSIEVITAPNDWAGVKSALEAAGYKSVDGDVTMRAQNETELSGDDAVKMQKLIDALEDLDDVQDVYTSAVLNLD</sequence>
<protein>
    <recommendedName>
        <fullName evidence="1">Probable transcriptional regulatory protein NGK_1508</fullName>
    </recommendedName>
</protein>
<gene>
    <name type="ordered locus">NGK_1508</name>
</gene>
<feature type="chain" id="PRO_1000132221" description="Probable transcriptional regulatory protein NGK_1508">
    <location>
        <begin position="1"/>
        <end position="242"/>
    </location>
</feature>
<keyword id="KW-0963">Cytoplasm</keyword>
<keyword id="KW-0238">DNA-binding</keyword>
<keyword id="KW-0804">Transcription</keyword>
<keyword id="KW-0805">Transcription regulation</keyword>
<name>Y1508_NEIG2</name>
<organism>
    <name type="scientific">Neisseria gonorrhoeae (strain NCCP11945)</name>
    <dbReference type="NCBI Taxonomy" id="521006"/>
    <lineage>
        <taxon>Bacteria</taxon>
        <taxon>Pseudomonadati</taxon>
        <taxon>Pseudomonadota</taxon>
        <taxon>Betaproteobacteria</taxon>
        <taxon>Neisseriales</taxon>
        <taxon>Neisseriaceae</taxon>
        <taxon>Neisseria</taxon>
    </lineage>
</organism>
<comment type="subcellular location">
    <subcellularLocation>
        <location evidence="1">Cytoplasm</location>
    </subcellularLocation>
</comment>
<comment type="similarity">
    <text evidence="1">Belongs to the TACO1 family.</text>
</comment>
<reference key="1">
    <citation type="journal article" date="2008" name="J. Bacteriol.">
        <title>Complete genome sequence of Neisseria gonorrhoeae NCCP11945.</title>
        <authorList>
            <person name="Chung G.T."/>
            <person name="Yoo J.S."/>
            <person name="Oh H.B."/>
            <person name="Lee Y.S."/>
            <person name="Cha S.H."/>
            <person name="Kim S.J."/>
            <person name="Yoo C.K."/>
        </authorList>
    </citation>
    <scope>NUCLEOTIDE SEQUENCE [LARGE SCALE GENOMIC DNA]</scope>
    <source>
        <strain>NCCP11945</strain>
    </source>
</reference>
<dbReference type="EMBL" id="CP001050">
    <property type="protein sequence ID" value="ACF30166.1"/>
    <property type="molecule type" value="Genomic_DNA"/>
</dbReference>
<dbReference type="RefSeq" id="WP_012503769.1">
    <property type="nucleotide sequence ID" value="NC_011035.1"/>
</dbReference>
<dbReference type="SMR" id="B4RMZ8"/>
<dbReference type="KEGG" id="ngk:NGK_1508"/>
<dbReference type="HOGENOM" id="CLU_062974_2_2_4"/>
<dbReference type="Proteomes" id="UP000002564">
    <property type="component" value="Chromosome"/>
</dbReference>
<dbReference type="GO" id="GO:0005829">
    <property type="term" value="C:cytosol"/>
    <property type="evidence" value="ECO:0007669"/>
    <property type="project" value="TreeGrafter"/>
</dbReference>
<dbReference type="GO" id="GO:0003677">
    <property type="term" value="F:DNA binding"/>
    <property type="evidence" value="ECO:0007669"/>
    <property type="project" value="UniProtKB-UniRule"/>
</dbReference>
<dbReference type="GO" id="GO:0006355">
    <property type="term" value="P:regulation of DNA-templated transcription"/>
    <property type="evidence" value="ECO:0007669"/>
    <property type="project" value="UniProtKB-UniRule"/>
</dbReference>
<dbReference type="FunFam" id="1.10.10.200:FF:000001">
    <property type="entry name" value="Probable transcriptional regulatory protein YebC"/>
    <property type="match status" value="1"/>
</dbReference>
<dbReference type="FunFam" id="3.30.70.980:FF:000002">
    <property type="entry name" value="Probable transcriptional regulatory protein YebC"/>
    <property type="match status" value="1"/>
</dbReference>
<dbReference type="Gene3D" id="1.10.10.200">
    <property type="match status" value="1"/>
</dbReference>
<dbReference type="Gene3D" id="3.30.70.980">
    <property type="match status" value="2"/>
</dbReference>
<dbReference type="HAMAP" id="MF_00693">
    <property type="entry name" value="Transcrip_reg_TACO1"/>
    <property type="match status" value="1"/>
</dbReference>
<dbReference type="InterPro" id="IPR017856">
    <property type="entry name" value="Integrase-like_N"/>
</dbReference>
<dbReference type="InterPro" id="IPR048300">
    <property type="entry name" value="TACO1_YebC-like_2nd/3rd_dom"/>
</dbReference>
<dbReference type="InterPro" id="IPR049083">
    <property type="entry name" value="TACO1_YebC_N"/>
</dbReference>
<dbReference type="InterPro" id="IPR002876">
    <property type="entry name" value="Transcrip_reg_TACO1-like"/>
</dbReference>
<dbReference type="InterPro" id="IPR026564">
    <property type="entry name" value="Transcrip_reg_TACO1-like_dom3"/>
</dbReference>
<dbReference type="InterPro" id="IPR029072">
    <property type="entry name" value="YebC-like"/>
</dbReference>
<dbReference type="NCBIfam" id="NF001030">
    <property type="entry name" value="PRK00110.1"/>
    <property type="match status" value="1"/>
</dbReference>
<dbReference type="NCBIfam" id="NF009044">
    <property type="entry name" value="PRK12378.1"/>
    <property type="match status" value="1"/>
</dbReference>
<dbReference type="NCBIfam" id="TIGR01033">
    <property type="entry name" value="YebC/PmpR family DNA-binding transcriptional regulator"/>
    <property type="match status" value="1"/>
</dbReference>
<dbReference type="PANTHER" id="PTHR12532:SF6">
    <property type="entry name" value="TRANSCRIPTIONAL REGULATORY PROTEIN YEBC-RELATED"/>
    <property type="match status" value="1"/>
</dbReference>
<dbReference type="PANTHER" id="PTHR12532">
    <property type="entry name" value="TRANSLATIONAL ACTIVATOR OF CYTOCHROME C OXIDASE 1"/>
    <property type="match status" value="1"/>
</dbReference>
<dbReference type="Pfam" id="PF20772">
    <property type="entry name" value="TACO1_YebC_N"/>
    <property type="match status" value="1"/>
</dbReference>
<dbReference type="Pfam" id="PF01709">
    <property type="entry name" value="Transcrip_reg"/>
    <property type="match status" value="1"/>
</dbReference>
<dbReference type="SUPFAM" id="SSF75625">
    <property type="entry name" value="YebC-like"/>
    <property type="match status" value="1"/>
</dbReference>
<proteinExistence type="inferred from homology"/>
<evidence type="ECO:0000255" key="1">
    <source>
        <dbReference type="HAMAP-Rule" id="MF_00693"/>
    </source>
</evidence>
<accession>B4RMZ8</accession>